<gene>
    <name evidence="1" type="primary">rimM</name>
    <name type="ordered locus">Arth_2481</name>
</gene>
<keyword id="KW-0143">Chaperone</keyword>
<keyword id="KW-0963">Cytoplasm</keyword>
<keyword id="KW-1185">Reference proteome</keyword>
<keyword id="KW-0690">Ribosome biogenesis</keyword>
<keyword id="KW-0698">rRNA processing</keyword>
<accession>A0JXU0</accession>
<dbReference type="EMBL" id="CP000454">
    <property type="protein sequence ID" value="ABK03860.1"/>
    <property type="molecule type" value="Genomic_DNA"/>
</dbReference>
<dbReference type="RefSeq" id="WP_011692323.1">
    <property type="nucleotide sequence ID" value="NC_008541.1"/>
</dbReference>
<dbReference type="SMR" id="A0JXU0"/>
<dbReference type="STRING" id="290399.Arth_2481"/>
<dbReference type="KEGG" id="art:Arth_2481"/>
<dbReference type="eggNOG" id="COG0806">
    <property type="taxonomic scope" value="Bacteria"/>
</dbReference>
<dbReference type="HOGENOM" id="CLU_077636_0_0_11"/>
<dbReference type="OrthoDB" id="5381335at2"/>
<dbReference type="Proteomes" id="UP000000754">
    <property type="component" value="Chromosome"/>
</dbReference>
<dbReference type="GO" id="GO:0005737">
    <property type="term" value="C:cytoplasm"/>
    <property type="evidence" value="ECO:0007669"/>
    <property type="project" value="UniProtKB-SubCell"/>
</dbReference>
<dbReference type="GO" id="GO:0005840">
    <property type="term" value="C:ribosome"/>
    <property type="evidence" value="ECO:0007669"/>
    <property type="project" value="InterPro"/>
</dbReference>
<dbReference type="GO" id="GO:0043022">
    <property type="term" value="F:ribosome binding"/>
    <property type="evidence" value="ECO:0007669"/>
    <property type="project" value="InterPro"/>
</dbReference>
<dbReference type="GO" id="GO:0042274">
    <property type="term" value="P:ribosomal small subunit biogenesis"/>
    <property type="evidence" value="ECO:0007669"/>
    <property type="project" value="UniProtKB-UniRule"/>
</dbReference>
<dbReference type="GO" id="GO:0006364">
    <property type="term" value="P:rRNA processing"/>
    <property type="evidence" value="ECO:0007669"/>
    <property type="project" value="UniProtKB-UniRule"/>
</dbReference>
<dbReference type="Gene3D" id="2.30.30.240">
    <property type="entry name" value="PRC-barrel domain"/>
    <property type="match status" value="1"/>
</dbReference>
<dbReference type="Gene3D" id="2.40.30.60">
    <property type="entry name" value="RimM"/>
    <property type="match status" value="1"/>
</dbReference>
<dbReference type="HAMAP" id="MF_00014">
    <property type="entry name" value="Ribosome_mat_RimM"/>
    <property type="match status" value="1"/>
</dbReference>
<dbReference type="InterPro" id="IPR011033">
    <property type="entry name" value="PRC_barrel-like_sf"/>
</dbReference>
<dbReference type="InterPro" id="IPR056792">
    <property type="entry name" value="PRC_RimM"/>
</dbReference>
<dbReference type="InterPro" id="IPR011961">
    <property type="entry name" value="RimM"/>
</dbReference>
<dbReference type="InterPro" id="IPR002676">
    <property type="entry name" value="RimM_N"/>
</dbReference>
<dbReference type="InterPro" id="IPR036976">
    <property type="entry name" value="RimM_N_sf"/>
</dbReference>
<dbReference type="InterPro" id="IPR009000">
    <property type="entry name" value="Transl_B-barrel_sf"/>
</dbReference>
<dbReference type="NCBIfam" id="TIGR02273">
    <property type="entry name" value="16S_RimM"/>
    <property type="match status" value="1"/>
</dbReference>
<dbReference type="PANTHER" id="PTHR33692">
    <property type="entry name" value="RIBOSOME MATURATION FACTOR RIMM"/>
    <property type="match status" value="1"/>
</dbReference>
<dbReference type="PANTHER" id="PTHR33692:SF1">
    <property type="entry name" value="RIBOSOME MATURATION FACTOR RIMM"/>
    <property type="match status" value="1"/>
</dbReference>
<dbReference type="Pfam" id="PF24986">
    <property type="entry name" value="PRC_RimM"/>
    <property type="match status" value="1"/>
</dbReference>
<dbReference type="Pfam" id="PF01782">
    <property type="entry name" value="RimM"/>
    <property type="match status" value="1"/>
</dbReference>
<dbReference type="SUPFAM" id="SSF50346">
    <property type="entry name" value="PRC-barrel domain"/>
    <property type="match status" value="1"/>
</dbReference>
<dbReference type="SUPFAM" id="SSF50447">
    <property type="entry name" value="Translation proteins"/>
    <property type="match status" value="1"/>
</dbReference>
<name>RIMM_ARTS2</name>
<evidence type="ECO:0000255" key="1">
    <source>
        <dbReference type="HAMAP-Rule" id="MF_00014"/>
    </source>
</evidence>
<evidence type="ECO:0000256" key="2">
    <source>
        <dbReference type="SAM" id="MobiDB-lite"/>
    </source>
</evidence>
<organism>
    <name type="scientific">Arthrobacter sp. (strain FB24)</name>
    <dbReference type="NCBI Taxonomy" id="290399"/>
    <lineage>
        <taxon>Bacteria</taxon>
        <taxon>Bacillati</taxon>
        <taxon>Actinomycetota</taxon>
        <taxon>Actinomycetes</taxon>
        <taxon>Micrococcales</taxon>
        <taxon>Micrococcaceae</taxon>
        <taxon>Arthrobacter</taxon>
    </lineage>
</organism>
<sequence length="197" mass="21210">MQLQVARIGKPHGIRGEVTVQVLTDAPEDRFIPGTRFVVEPASAGPLTVDSARWNKDILLLGFEGIETRNQAEALRGAKLFIETEELEEEDDEGWYEHELVGLDVRVGDAVVGTISGLRTLPVQDLIVVESPDGKEILIPFVEEIVPEVNVGEKYILVTPPPGLFEINVEDSGETSDAGESGPGEAEPGKAEAGDNA</sequence>
<proteinExistence type="inferred from homology"/>
<protein>
    <recommendedName>
        <fullName evidence="1">Ribosome maturation factor RimM</fullName>
    </recommendedName>
</protein>
<reference key="1">
    <citation type="journal article" date="2013" name="Stand. Genomic Sci.">
        <title>Complete genome sequence of Arthrobacter sp. strain FB24.</title>
        <authorList>
            <person name="Nakatsu C.H."/>
            <person name="Barabote R."/>
            <person name="Thompson S."/>
            <person name="Bruce D."/>
            <person name="Detter C."/>
            <person name="Brettin T."/>
            <person name="Han C."/>
            <person name="Beasley F."/>
            <person name="Chen W."/>
            <person name="Konopka A."/>
            <person name="Xie G."/>
        </authorList>
    </citation>
    <scope>NUCLEOTIDE SEQUENCE [LARGE SCALE GENOMIC DNA]</scope>
    <source>
        <strain>FB24</strain>
    </source>
</reference>
<comment type="function">
    <text evidence="1">An accessory protein needed during the final step in the assembly of 30S ribosomal subunit, possibly for assembly of the head region. Essential for efficient processing of 16S rRNA. May be needed both before and after RbfA during the maturation of 16S rRNA. It has affinity for free ribosomal 30S subunits but not for 70S ribosomes.</text>
</comment>
<comment type="subunit">
    <text evidence="1">Binds ribosomal protein uS19.</text>
</comment>
<comment type="subcellular location">
    <subcellularLocation>
        <location evidence="1">Cytoplasm</location>
    </subcellularLocation>
</comment>
<comment type="domain">
    <text evidence="1">The PRC barrel domain binds ribosomal protein uS19.</text>
</comment>
<comment type="similarity">
    <text evidence="1">Belongs to the RimM family.</text>
</comment>
<feature type="chain" id="PRO_0000321714" description="Ribosome maturation factor RimM">
    <location>
        <begin position="1"/>
        <end position="197"/>
    </location>
</feature>
<feature type="domain" description="PRC barrel" evidence="1">
    <location>
        <begin position="92"/>
        <end position="164"/>
    </location>
</feature>
<feature type="region of interest" description="Disordered" evidence="2">
    <location>
        <begin position="167"/>
        <end position="197"/>
    </location>
</feature>
<feature type="compositionally biased region" description="Low complexity" evidence="2">
    <location>
        <begin position="176"/>
        <end position="186"/>
    </location>
</feature>
<feature type="compositionally biased region" description="Basic and acidic residues" evidence="2">
    <location>
        <begin position="187"/>
        <end position="197"/>
    </location>
</feature>